<proteinExistence type="evidence at transcript level"/>
<sequence length="407" mass="44973">MPIKPVLTTLIALLSIILALYTIQLPSSRSLSSIATTIGALAKYSTFFGHKHHHHHHHHHHHHHYHHHEPIKCCEKWTSRLRHQYKTSLVLTVDLHGCGNFSNVQSAIDVVPDLSSSKTLIIVNSGSYREKVTVNENKTNLVIQGRGYQNTSIEWNDTAKSAGNTADSFSFVVFAANFTAYNISFKNNAPEPDPGEADAQAVALRIEGDQAAFYGCGFYGAQDTLLDDKGRHFFKECFIQGSIDFIFGNGRSLYQDCTINSIAKGNTSGVTGSITAQGRQSEDEQSGFSFVNCKIDGSGEILLGRAWGAYATVVFSNTYMSGIITPEGWNNWGDSTKEKTVTFGEHKCYGPGADYKERVLFGKQLTDSEASSFIDVSFIDGDEWLRHTNIVSEHTSKDIGDDLIGFY</sequence>
<gene>
    <name type="primary">PME15</name>
    <name type="synonym">ARATH15</name>
    <name type="ordered locus">At2g36710</name>
    <name type="ORF">F13K3.11</name>
</gene>
<name>PME15_ARATH</name>
<evidence type="ECO:0000250" key="1"/>
<evidence type="ECO:0000255" key="2"/>
<evidence type="ECO:0000255" key="3">
    <source>
        <dbReference type="PROSITE-ProRule" id="PRU10040"/>
    </source>
</evidence>
<evidence type="ECO:0000269" key="4">
    <source>
    </source>
</evidence>
<evidence type="ECO:0000305" key="5"/>
<protein>
    <recommendedName>
        <fullName>Probable pectinesterase 15</fullName>
        <shortName>PE 15</shortName>
        <ecNumber>3.1.1.11</ecNumber>
    </recommendedName>
    <alternativeName>
        <fullName>Pectin methylesterase 15</fullName>
        <shortName>AtPME15</shortName>
    </alternativeName>
</protein>
<comment type="function">
    <text evidence="1">Acts in the modification of cell walls via demethylesterification of cell wall pectin.</text>
</comment>
<comment type="catalytic activity">
    <reaction>
        <text>[(1-&gt;4)-alpha-D-galacturonosyl methyl ester](n) + n H2O = [(1-&gt;4)-alpha-D-galacturonosyl](n) + n methanol + n H(+)</text>
        <dbReference type="Rhea" id="RHEA:22380"/>
        <dbReference type="Rhea" id="RHEA-COMP:14570"/>
        <dbReference type="Rhea" id="RHEA-COMP:14573"/>
        <dbReference type="ChEBI" id="CHEBI:15377"/>
        <dbReference type="ChEBI" id="CHEBI:15378"/>
        <dbReference type="ChEBI" id="CHEBI:17790"/>
        <dbReference type="ChEBI" id="CHEBI:140522"/>
        <dbReference type="ChEBI" id="CHEBI:140523"/>
        <dbReference type="EC" id="3.1.1.11"/>
    </reaction>
</comment>
<comment type="pathway">
    <text>Glycan metabolism; pectin degradation; 2-dehydro-3-deoxy-D-gluconate from pectin: step 1/5.</text>
</comment>
<comment type="subcellular location">
    <subcellularLocation>
        <location evidence="1">Secreted</location>
        <location evidence="1">Cell wall</location>
    </subcellularLocation>
</comment>
<comment type="tissue specificity">
    <text evidence="4">Expressed in siliques.</text>
</comment>
<comment type="developmental stage">
    <text evidence="4">Expressed throughout silique development.</text>
</comment>
<comment type="similarity">
    <text evidence="5">Belongs to the pectinesterase family.</text>
</comment>
<keyword id="KW-0063">Aspartyl esterase</keyword>
<keyword id="KW-0134">Cell wall</keyword>
<keyword id="KW-0961">Cell wall biogenesis/degradation</keyword>
<keyword id="KW-0325">Glycoprotein</keyword>
<keyword id="KW-0378">Hydrolase</keyword>
<keyword id="KW-1185">Reference proteome</keyword>
<keyword id="KW-0964">Secreted</keyword>
<keyword id="KW-0732">Signal</keyword>
<organism>
    <name type="scientific">Arabidopsis thaliana</name>
    <name type="common">Mouse-ear cress</name>
    <dbReference type="NCBI Taxonomy" id="3702"/>
    <lineage>
        <taxon>Eukaryota</taxon>
        <taxon>Viridiplantae</taxon>
        <taxon>Streptophyta</taxon>
        <taxon>Embryophyta</taxon>
        <taxon>Tracheophyta</taxon>
        <taxon>Spermatophyta</taxon>
        <taxon>Magnoliopsida</taxon>
        <taxon>eudicotyledons</taxon>
        <taxon>Gunneridae</taxon>
        <taxon>Pentapetalae</taxon>
        <taxon>rosids</taxon>
        <taxon>malvids</taxon>
        <taxon>Brassicales</taxon>
        <taxon>Brassicaceae</taxon>
        <taxon>Camelineae</taxon>
        <taxon>Arabidopsis</taxon>
    </lineage>
</organism>
<reference key="1">
    <citation type="journal article" date="1999" name="Nature">
        <title>Sequence and analysis of chromosome 2 of the plant Arabidopsis thaliana.</title>
        <authorList>
            <person name="Lin X."/>
            <person name="Kaul S."/>
            <person name="Rounsley S.D."/>
            <person name="Shea T.P."/>
            <person name="Benito M.-I."/>
            <person name="Town C.D."/>
            <person name="Fujii C.Y."/>
            <person name="Mason T.M."/>
            <person name="Bowman C.L."/>
            <person name="Barnstead M.E."/>
            <person name="Feldblyum T.V."/>
            <person name="Buell C.R."/>
            <person name="Ketchum K.A."/>
            <person name="Lee J.J."/>
            <person name="Ronning C.M."/>
            <person name="Koo H.L."/>
            <person name="Moffat K.S."/>
            <person name="Cronin L.A."/>
            <person name="Shen M."/>
            <person name="Pai G."/>
            <person name="Van Aken S."/>
            <person name="Umayam L."/>
            <person name="Tallon L.J."/>
            <person name="Gill J.E."/>
            <person name="Adams M.D."/>
            <person name="Carrera A.J."/>
            <person name="Creasy T.H."/>
            <person name="Goodman H.M."/>
            <person name="Somerville C.R."/>
            <person name="Copenhaver G.P."/>
            <person name="Preuss D."/>
            <person name="Nierman W.C."/>
            <person name="White O."/>
            <person name="Eisen J.A."/>
            <person name="Salzberg S.L."/>
            <person name="Fraser C.M."/>
            <person name="Venter J.C."/>
        </authorList>
    </citation>
    <scope>NUCLEOTIDE SEQUENCE [LARGE SCALE GENOMIC DNA]</scope>
    <source>
        <strain>cv. Columbia</strain>
    </source>
</reference>
<reference key="2">
    <citation type="journal article" date="2017" name="Plant J.">
        <title>Araport11: a complete reannotation of the Arabidopsis thaliana reference genome.</title>
        <authorList>
            <person name="Cheng C.Y."/>
            <person name="Krishnakumar V."/>
            <person name="Chan A.P."/>
            <person name="Thibaud-Nissen F."/>
            <person name="Schobel S."/>
            <person name="Town C.D."/>
        </authorList>
    </citation>
    <scope>GENOME REANNOTATION</scope>
    <source>
        <strain>cv. Columbia</strain>
    </source>
</reference>
<reference key="3">
    <citation type="journal article" date="2003" name="Science">
        <title>Empirical analysis of transcriptional activity in the Arabidopsis genome.</title>
        <authorList>
            <person name="Yamada K."/>
            <person name="Lim J."/>
            <person name="Dale J.M."/>
            <person name="Chen H."/>
            <person name="Shinn P."/>
            <person name="Palm C.J."/>
            <person name="Southwick A.M."/>
            <person name="Wu H.C."/>
            <person name="Kim C.J."/>
            <person name="Nguyen M."/>
            <person name="Pham P.K."/>
            <person name="Cheuk R.F."/>
            <person name="Karlin-Newmann G."/>
            <person name="Liu S.X."/>
            <person name="Lam B."/>
            <person name="Sakano H."/>
            <person name="Wu T."/>
            <person name="Yu G."/>
            <person name="Miranda M."/>
            <person name="Quach H.L."/>
            <person name="Tripp M."/>
            <person name="Chang C.H."/>
            <person name="Lee J.M."/>
            <person name="Toriumi M.J."/>
            <person name="Chan M.M."/>
            <person name="Tang C.C."/>
            <person name="Onodera C.S."/>
            <person name="Deng J.M."/>
            <person name="Akiyama K."/>
            <person name="Ansari Y."/>
            <person name="Arakawa T."/>
            <person name="Banh J."/>
            <person name="Banno F."/>
            <person name="Bowser L."/>
            <person name="Brooks S.Y."/>
            <person name="Carninci P."/>
            <person name="Chao Q."/>
            <person name="Choy N."/>
            <person name="Enju A."/>
            <person name="Goldsmith A.D."/>
            <person name="Gurjal M."/>
            <person name="Hansen N.F."/>
            <person name="Hayashizaki Y."/>
            <person name="Johnson-Hopson C."/>
            <person name="Hsuan V.W."/>
            <person name="Iida K."/>
            <person name="Karnes M."/>
            <person name="Khan S."/>
            <person name="Koesema E."/>
            <person name="Ishida J."/>
            <person name="Jiang P.X."/>
            <person name="Jones T."/>
            <person name="Kawai J."/>
            <person name="Kamiya A."/>
            <person name="Meyers C."/>
            <person name="Nakajima M."/>
            <person name="Narusaka M."/>
            <person name="Seki M."/>
            <person name="Sakurai T."/>
            <person name="Satou M."/>
            <person name="Tamse R."/>
            <person name="Vaysberg M."/>
            <person name="Wallender E.K."/>
            <person name="Wong C."/>
            <person name="Yamamura Y."/>
            <person name="Yuan S."/>
            <person name="Shinozaki K."/>
            <person name="Davis R.W."/>
            <person name="Theologis A."/>
            <person name="Ecker J.R."/>
        </authorList>
    </citation>
    <scope>NUCLEOTIDE SEQUENCE [LARGE SCALE MRNA]</scope>
    <source>
        <strain>cv. Columbia</strain>
    </source>
</reference>
<reference key="4">
    <citation type="journal article" date="2004" name="Carbohydr. Res.">
        <title>Pectin methylesterases: sequence-structural features and phylogenetic relationships.</title>
        <authorList>
            <person name="Markovic O."/>
            <person name="Janecek S."/>
        </authorList>
    </citation>
    <scope>GENE FAMILY</scope>
    <scope>NOMENCLATURE</scope>
</reference>
<reference key="5">
    <citation type="journal article" date="2006" name="Planta">
        <title>Comprehensive expression profiling of the pectin methylesterase gene family during silique development in Arabidopsis thaliana.</title>
        <authorList>
            <person name="Louvet R."/>
            <person name="Cavel E."/>
            <person name="Gutierrez L."/>
            <person name="Guenin S."/>
            <person name="Roger D."/>
            <person name="Gillet F."/>
            <person name="Guerineau F."/>
            <person name="Pelloux J."/>
        </authorList>
    </citation>
    <scope>TISSUE SPECIFICITY</scope>
    <scope>DEVELOPMENTAL STAGE</scope>
</reference>
<dbReference type="EC" id="3.1.1.11"/>
<dbReference type="EMBL" id="AC006282">
    <property type="protein sequence ID" value="AAD20147.1"/>
    <property type="molecule type" value="Genomic_DNA"/>
</dbReference>
<dbReference type="EMBL" id="CP002685">
    <property type="protein sequence ID" value="AEC09289.1"/>
    <property type="molecule type" value="Genomic_DNA"/>
</dbReference>
<dbReference type="EMBL" id="BT002906">
    <property type="protein sequence ID" value="AAO22722.1"/>
    <property type="molecule type" value="mRNA"/>
</dbReference>
<dbReference type="PIR" id="G84783">
    <property type="entry name" value="G84783"/>
</dbReference>
<dbReference type="RefSeq" id="NP_181209.1">
    <property type="nucleotide sequence ID" value="NM_129226.4"/>
</dbReference>
<dbReference type="SMR" id="Q9ZQA3"/>
<dbReference type="FunCoup" id="Q9ZQA3">
    <property type="interactions" value="61"/>
</dbReference>
<dbReference type="STRING" id="3702.Q9ZQA3"/>
<dbReference type="GlyCosmos" id="Q9ZQA3">
    <property type="glycosylation" value="7 sites, No reported glycans"/>
</dbReference>
<dbReference type="GlyGen" id="Q9ZQA3">
    <property type="glycosylation" value="7 sites"/>
</dbReference>
<dbReference type="iPTMnet" id="Q9ZQA3"/>
<dbReference type="PaxDb" id="3702-AT2G36710.1"/>
<dbReference type="ProteomicsDB" id="236642"/>
<dbReference type="EnsemblPlants" id="AT2G36710.1">
    <property type="protein sequence ID" value="AT2G36710.1"/>
    <property type="gene ID" value="AT2G36710"/>
</dbReference>
<dbReference type="GeneID" id="818243"/>
<dbReference type="Gramene" id="AT2G36710.1">
    <property type="protein sequence ID" value="AT2G36710.1"/>
    <property type="gene ID" value="AT2G36710"/>
</dbReference>
<dbReference type="KEGG" id="ath:AT2G36710"/>
<dbReference type="Araport" id="AT2G36710"/>
<dbReference type="TAIR" id="AT2G36710"/>
<dbReference type="eggNOG" id="ENOG502QUTX">
    <property type="taxonomic scope" value="Eukaryota"/>
</dbReference>
<dbReference type="HOGENOM" id="CLU_012243_3_0_1"/>
<dbReference type="InParanoid" id="Q9ZQA3"/>
<dbReference type="OMA" id="PIKCCEK"/>
<dbReference type="PhylomeDB" id="Q9ZQA3"/>
<dbReference type="BioCyc" id="ARA:AT2G36710-MONOMER"/>
<dbReference type="UniPathway" id="UPA00545">
    <property type="reaction ID" value="UER00823"/>
</dbReference>
<dbReference type="PRO" id="PR:Q9ZQA3"/>
<dbReference type="Proteomes" id="UP000006548">
    <property type="component" value="Chromosome 2"/>
</dbReference>
<dbReference type="ExpressionAtlas" id="Q9ZQA3">
    <property type="expression patterns" value="baseline and differential"/>
</dbReference>
<dbReference type="GO" id="GO:0005576">
    <property type="term" value="C:extracellular region"/>
    <property type="evidence" value="ECO:0007669"/>
    <property type="project" value="UniProtKB-KW"/>
</dbReference>
<dbReference type="GO" id="GO:0030599">
    <property type="term" value="F:pectinesterase activity"/>
    <property type="evidence" value="ECO:0007669"/>
    <property type="project" value="UniProtKB-EC"/>
</dbReference>
<dbReference type="GO" id="GO:0042545">
    <property type="term" value="P:cell wall modification"/>
    <property type="evidence" value="ECO:0007669"/>
    <property type="project" value="InterPro"/>
</dbReference>
<dbReference type="GO" id="GO:0045490">
    <property type="term" value="P:pectin catabolic process"/>
    <property type="evidence" value="ECO:0007669"/>
    <property type="project" value="UniProtKB-UniPathway"/>
</dbReference>
<dbReference type="FunFam" id="2.160.20.10:FF:000033">
    <property type="entry name" value="Pectinesterase"/>
    <property type="match status" value="1"/>
</dbReference>
<dbReference type="Gene3D" id="2.160.20.10">
    <property type="entry name" value="Single-stranded right-handed beta-helix, Pectin lyase-like"/>
    <property type="match status" value="1"/>
</dbReference>
<dbReference type="InterPro" id="IPR012334">
    <property type="entry name" value="Pectin_lyas_fold"/>
</dbReference>
<dbReference type="InterPro" id="IPR011050">
    <property type="entry name" value="Pectin_lyase_fold/virulence"/>
</dbReference>
<dbReference type="InterPro" id="IPR033131">
    <property type="entry name" value="Pectinesterase_Asp_AS"/>
</dbReference>
<dbReference type="InterPro" id="IPR000070">
    <property type="entry name" value="Pectinesterase_cat"/>
</dbReference>
<dbReference type="PANTHER" id="PTHR31321">
    <property type="entry name" value="ACYL-COA THIOESTER HYDROLASE YBHC-RELATED"/>
    <property type="match status" value="1"/>
</dbReference>
<dbReference type="PANTHER" id="PTHR31321:SF73">
    <property type="entry name" value="PECTINESTERASE 14-RELATED"/>
    <property type="match status" value="1"/>
</dbReference>
<dbReference type="Pfam" id="PF01095">
    <property type="entry name" value="Pectinesterase"/>
    <property type="match status" value="1"/>
</dbReference>
<dbReference type="SUPFAM" id="SSF51126">
    <property type="entry name" value="Pectin lyase-like"/>
    <property type="match status" value="1"/>
</dbReference>
<dbReference type="PROSITE" id="PS00503">
    <property type="entry name" value="PECTINESTERASE_2"/>
    <property type="match status" value="1"/>
</dbReference>
<feature type="signal peptide" evidence="2">
    <location>
        <begin position="1"/>
        <end position="22"/>
    </location>
</feature>
<feature type="chain" id="PRO_0000371672" description="Probable pectinesterase 15">
    <location>
        <begin position="23"/>
        <end position="407"/>
    </location>
</feature>
<feature type="active site" description="Proton donor" evidence="3">
    <location>
        <position position="223"/>
    </location>
</feature>
<feature type="active site" description="Nucleophile" evidence="3">
    <location>
        <position position="244"/>
    </location>
</feature>
<feature type="binding site" evidence="1">
    <location>
        <position position="165"/>
    </location>
    <ligand>
        <name>substrate</name>
    </ligand>
</feature>
<feature type="binding site" evidence="1">
    <location>
        <position position="200"/>
    </location>
    <ligand>
        <name>substrate</name>
    </ligand>
</feature>
<feature type="binding site" evidence="1">
    <location>
        <position position="305"/>
    </location>
    <ligand>
        <name>substrate</name>
    </ligand>
</feature>
<feature type="site" description="Transition state stabilizer" evidence="1">
    <location>
        <position position="222"/>
    </location>
</feature>
<feature type="glycosylation site" description="N-linked (GlcNAc...) asparagine" evidence="2">
    <location>
        <position position="100"/>
    </location>
</feature>
<feature type="glycosylation site" description="N-linked (GlcNAc...) asparagine" evidence="2">
    <location>
        <position position="137"/>
    </location>
</feature>
<feature type="glycosylation site" description="N-linked (GlcNAc...) asparagine" evidence="2">
    <location>
        <position position="150"/>
    </location>
</feature>
<feature type="glycosylation site" description="N-linked (GlcNAc...) asparagine" evidence="2">
    <location>
        <position position="156"/>
    </location>
</feature>
<feature type="glycosylation site" description="N-linked (GlcNAc...) asparagine" evidence="2">
    <location>
        <position position="177"/>
    </location>
</feature>
<feature type="glycosylation site" description="N-linked (GlcNAc...) asparagine" evidence="2">
    <location>
        <position position="182"/>
    </location>
</feature>
<feature type="glycosylation site" description="N-linked (GlcNAc...) asparagine" evidence="2">
    <location>
        <position position="266"/>
    </location>
</feature>
<feature type="sequence conflict" description="In Ref. 3; AAO22722." evidence="5" ref="3">
    <original>D</original>
    <variation>G</variation>
    <location>
        <position position="244"/>
    </location>
</feature>
<accession>Q9ZQA3</accession>
<accession>Q84WQ3</accession>